<protein>
    <recommendedName>
        <fullName evidence="1">RNA chaperone ProQ</fullName>
    </recommendedName>
</protein>
<proteinExistence type="inferred from homology"/>
<gene>
    <name evidence="1" type="primary">proQ</name>
    <name type="ordered locus">ECED1_2035</name>
</gene>
<accession>B7MVW1</accession>
<reference key="1">
    <citation type="journal article" date="2009" name="PLoS Genet.">
        <title>Organised genome dynamics in the Escherichia coli species results in highly diverse adaptive paths.</title>
        <authorList>
            <person name="Touchon M."/>
            <person name="Hoede C."/>
            <person name="Tenaillon O."/>
            <person name="Barbe V."/>
            <person name="Baeriswyl S."/>
            <person name="Bidet P."/>
            <person name="Bingen E."/>
            <person name="Bonacorsi S."/>
            <person name="Bouchier C."/>
            <person name="Bouvet O."/>
            <person name="Calteau A."/>
            <person name="Chiapello H."/>
            <person name="Clermont O."/>
            <person name="Cruveiller S."/>
            <person name="Danchin A."/>
            <person name="Diard M."/>
            <person name="Dossat C."/>
            <person name="Karoui M.E."/>
            <person name="Frapy E."/>
            <person name="Garry L."/>
            <person name="Ghigo J.M."/>
            <person name="Gilles A.M."/>
            <person name="Johnson J."/>
            <person name="Le Bouguenec C."/>
            <person name="Lescat M."/>
            <person name="Mangenot S."/>
            <person name="Martinez-Jehanne V."/>
            <person name="Matic I."/>
            <person name="Nassif X."/>
            <person name="Oztas S."/>
            <person name="Petit M.A."/>
            <person name="Pichon C."/>
            <person name="Rouy Z."/>
            <person name="Ruf C.S."/>
            <person name="Schneider D."/>
            <person name="Tourret J."/>
            <person name="Vacherie B."/>
            <person name="Vallenet D."/>
            <person name="Medigue C."/>
            <person name="Rocha E.P.C."/>
            <person name="Denamur E."/>
        </authorList>
    </citation>
    <scope>NUCLEOTIDE SEQUENCE [LARGE SCALE GENOMIC DNA]</scope>
    <source>
        <strain>ED1a</strain>
    </source>
</reference>
<keyword id="KW-0143">Chaperone</keyword>
<keyword id="KW-0963">Cytoplasm</keyword>
<keyword id="KW-0694">RNA-binding</keyword>
<organism>
    <name type="scientific">Escherichia coli O81 (strain ED1a)</name>
    <dbReference type="NCBI Taxonomy" id="585397"/>
    <lineage>
        <taxon>Bacteria</taxon>
        <taxon>Pseudomonadati</taxon>
        <taxon>Pseudomonadota</taxon>
        <taxon>Gammaproteobacteria</taxon>
        <taxon>Enterobacterales</taxon>
        <taxon>Enterobacteriaceae</taxon>
        <taxon>Escherichia</taxon>
    </lineage>
</organism>
<comment type="function">
    <text evidence="1">RNA chaperone with significant RNA binding, RNA strand exchange and RNA duplexing activities. May regulate ProP activity through an RNA-based, post-transcriptional mechanism.</text>
</comment>
<comment type="subcellular location">
    <subcellularLocation>
        <location evidence="1">Cytoplasm</location>
    </subcellularLocation>
</comment>
<comment type="similarity">
    <text evidence="1">Belongs to the ProQ family.</text>
</comment>
<feature type="chain" id="PRO_1000148344" description="RNA chaperone ProQ">
    <location>
        <begin position="1"/>
        <end position="232"/>
    </location>
</feature>
<feature type="region of interest" description="Disordered" evidence="2">
    <location>
        <begin position="105"/>
        <end position="182"/>
    </location>
</feature>
<feature type="compositionally biased region" description="Basic and acidic residues" evidence="2">
    <location>
        <begin position="117"/>
        <end position="136"/>
    </location>
</feature>
<feature type="compositionally biased region" description="Basic residues" evidence="2">
    <location>
        <begin position="137"/>
        <end position="146"/>
    </location>
</feature>
<feature type="compositionally biased region" description="Basic and acidic residues" evidence="2">
    <location>
        <begin position="147"/>
        <end position="177"/>
    </location>
</feature>
<dbReference type="EMBL" id="CU928162">
    <property type="protein sequence ID" value="CAR08227.2"/>
    <property type="molecule type" value="Genomic_DNA"/>
</dbReference>
<dbReference type="RefSeq" id="WP_000431376.1">
    <property type="nucleotide sequence ID" value="NC_011745.1"/>
</dbReference>
<dbReference type="SMR" id="B7MVW1"/>
<dbReference type="KEGG" id="ecq:ECED1_2035"/>
<dbReference type="HOGENOM" id="CLU_113254_0_0_6"/>
<dbReference type="Proteomes" id="UP000000748">
    <property type="component" value="Chromosome"/>
</dbReference>
<dbReference type="GO" id="GO:0005829">
    <property type="term" value="C:cytosol"/>
    <property type="evidence" value="ECO:0007669"/>
    <property type="project" value="TreeGrafter"/>
</dbReference>
<dbReference type="GO" id="GO:0033592">
    <property type="term" value="F:RNA strand annealing activity"/>
    <property type="evidence" value="ECO:0007669"/>
    <property type="project" value="UniProtKB-UniRule"/>
</dbReference>
<dbReference type="GO" id="GO:0034057">
    <property type="term" value="F:RNA strand-exchange activity"/>
    <property type="evidence" value="ECO:0007669"/>
    <property type="project" value="UniProtKB-UniRule"/>
</dbReference>
<dbReference type="GO" id="GO:0010608">
    <property type="term" value="P:post-transcriptional regulation of gene expression"/>
    <property type="evidence" value="ECO:0007669"/>
    <property type="project" value="InterPro"/>
</dbReference>
<dbReference type="FunFam" id="1.10.1710.10:FF:000001">
    <property type="entry name" value="RNA chaperone ProQ"/>
    <property type="match status" value="1"/>
</dbReference>
<dbReference type="Gene3D" id="1.10.1710.10">
    <property type="entry name" value="ProQ/FinO domain"/>
    <property type="match status" value="1"/>
</dbReference>
<dbReference type="HAMAP" id="MF_00749">
    <property type="entry name" value="ProQ"/>
    <property type="match status" value="1"/>
</dbReference>
<dbReference type="InterPro" id="IPR023529">
    <property type="entry name" value="ProQ"/>
</dbReference>
<dbReference type="InterPro" id="IPR016103">
    <property type="entry name" value="ProQ/FinO"/>
</dbReference>
<dbReference type="InterPro" id="IPR036442">
    <property type="entry name" value="ProQ/FinO_sf"/>
</dbReference>
<dbReference type="InterPro" id="IPR035236">
    <property type="entry name" value="ProQ_C"/>
</dbReference>
<dbReference type="NCBIfam" id="NF003434">
    <property type="entry name" value="PRK04950.1"/>
    <property type="match status" value="1"/>
</dbReference>
<dbReference type="PANTHER" id="PTHR38106">
    <property type="entry name" value="RNA CHAPERONE PROQ"/>
    <property type="match status" value="1"/>
</dbReference>
<dbReference type="PANTHER" id="PTHR38106:SF1">
    <property type="entry name" value="RNA CHAPERONE PROQ"/>
    <property type="match status" value="1"/>
</dbReference>
<dbReference type="Pfam" id="PF04352">
    <property type="entry name" value="ProQ"/>
    <property type="match status" value="1"/>
</dbReference>
<dbReference type="Pfam" id="PF17516">
    <property type="entry name" value="ProQ_C"/>
    <property type="match status" value="1"/>
</dbReference>
<dbReference type="SMART" id="SM00945">
    <property type="entry name" value="ProQ"/>
    <property type="match status" value="1"/>
</dbReference>
<dbReference type="SUPFAM" id="SSF48657">
    <property type="entry name" value="FinO-like"/>
    <property type="match status" value="1"/>
</dbReference>
<sequence length="232" mass="25878">MENQPKLNSSKEVIAFLAERFPHCFSAEGEARPLKIGIFQDLVDRVAGEMNLSKTQLRSALRLYTSSWRYLYGVKPGATRVDLDGNPCGELDEQHVEHARKQLEEAKARVQAQRAEQQAKKREAAAAAGEKEDAPRRERKPRPTTPRRKEGAERKPRSQKPVEKAPKTVKAPREEQHTPVSDISALTVGQALKVKAGQNAMDATVLEITKDGVRVQLNSGMSLIVRAEHLVF</sequence>
<name>PROQ_ECO81</name>
<evidence type="ECO:0000255" key="1">
    <source>
        <dbReference type="HAMAP-Rule" id="MF_00749"/>
    </source>
</evidence>
<evidence type="ECO:0000256" key="2">
    <source>
        <dbReference type="SAM" id="MobiDB-lite"/>
    </source>
</evidence>